<sequence length="142" mass="15103">MAAMTVQLDIVSAEGGIYSGRVSHLQVTGSEGELGIMHGHAPLISKIKPGMARVTKQDGSEEVFYLSGGILEVQPASTSILADVVLRADDIDEKAAIEAKNRAEAHMVDAGSDFDYQAALIEIAKATAQLRVLETIKKNIAR</sequence>
<evidence type="ECO:0000255" key="1">
    <source>
        <dbReference type="HAMAP-Rule" id="MF_00530"/>
    </source>
</evidence>
<keyword id="KW-0066">ATP synthesis</keyword>
<keyword id="KW-0997">Cell inner membrane</keyword>
<keyword id="KW-1003">Cell membrane</keyword>
<keyword id="KW-0139">CF(1)</keyword>
<keyword id="KW-0375">Hydrogen ion transport</keyword>
<keyword id="KW-0406">Ion transport</keyword>
<keyword id="KW-0472">Membrane</keyword>
<keyword id="KW-1185">Reference proteome</keyword>
<keyword id="KW-0813">Transport</keyword>
<gene>
    <name evidence="1" type="primary">atpC</name>
    <name type="ordered locus">Sden_3751</name>
</gene>
<reference key="1">
    <citation type="submission" date="2006-03" db="EMBL/GenBank/DDBJ databases">
        <title>Complete sequence of Shewanella denitrificans OS217.</title>
        <authorList>
            <consortium name="US DOE Joint Genome Institute"/>
            <person name="Copeland A."/>
            <person name="Lucas S."/>
            <person name="Lapidus A."/>
            <person name="Barry K."/>
            <person name="Detter J.C."/>
            <person name="Glavina del Rio T."/>
            <person name="Hammon N."/>
            <person name="Israni S."/>
            <person name="Dalin E."/>
            <person name="Tice H."/>
            <person name="Pitluck S."/>
            <person name="Brettin T."/>
            <person name="Bruce D."/>
            <person name="Han C."/>
            <person name="Tapia R."/>
            <person name="Gilna P."/>
            <person name="Kiss H."/>
            <person name="Schmutz J."/>
            <person name="Larimer F."/>
            <person name="Land M."/>
            <person name="Hauser L."/>
            <person name="Kyrpides N."/>
            <person name="Lykidis A."/>
            <person name="Richardson P."/>
        </authorList>
    </citation>
    <scope>NUCLEOTIDE SEQUENCE [LARGE SCALE GENOMIC DNA]</scope>
    <source>
        <strain>OS217 / ATCC BAA-1090 / DSM 15013</strain>
    </source>
</reference>
<protein>
    <recommendedName>
        <fullName evidence="1">ATP synthase epsilon chain</fullName>
    </recommendedName>
    <alternativeName>
        <fullName evidence="1">ATP synthase F1 sector epsilon subunit</fullName>
    </alternativeName>
    <alternativeName>
        <fullName evidence="1">F-ATPase epsilon subunit</fullName>
    </alternativeName>
</protein>
<accession>Q12HQ2</accession>
<name>ATPE_SHEDO</name>
<organism>
    <name type="scientific">Shewanella denitrificans (strain OS217 / ATCC BAA-1090 / DSM 15013)</name>
    <dbReference type="NCBI Taxonomy" id="318161"/>
    <lineage>
        <taxon>Bacteria</taxon>
        <taxon>Pseudomonadati</taxon>
        <taxon>Pseudomonadota</taxon>
        <taxon>Gammaproteobacteria</taxon>
        <taxon>Alteromonadales</taxon>
        <taxon>Shewanellaceae</taxon>
        <taxon>Shewanella</taxon>
    </lineage>
</organism>
<dbReference type="EMBL" id="CP000302">
    <property type="protein sequence ID" value="ABE57024.1"/>
    <property type="molecule type" value="Genomic_DNA"/>
</dbReference>
<dbReference type="RefSeq" id="WP_011498162.1">
    <property type="nucleotide sequence ID" value="NC_007954.1"/>
</dbReference>
<dbReference type="SMR" id="Q12HQ2"/>
<dbReference type="STRING" id="318161.Sden_3751"/>
<dbReference type="KEGG" id="sdn:Sden_3751"/>
<dbReference type="eggNOG" id="COG0355">
    <property type="taxonomic scope" value="Bacteria"/>
</dbReference>
<dbReference type="HOGENOM" id="CLU_084338_2_0_6"/>
<dbReference type="OrthoDB" id="9791445at2"/>
<dbReference type="Proteomes" id="UP000001982">
    <property type="component" value="Chromosome"/>
</dbReference>
<dbReference type="GO" id="GO:0005886">
    <property type="term" value="C:plasma membrane"/>
    <property type="evidence" value="ECO:0007669"/>
    <property type="project" value="UniProtKB-SubCell"/>
</dbReference>
<dbReference type="GO" id="GO:0045259">
    <property type="term" value="C:proton-transporting ATP synthase complex"/>
    <property type="evidence" value="ECO:0007669"/>
    <property type="project" value="UniProtKB-KW"/>
</dbReference>
<dbReference type="GO" id="GO:0005524">
    <property type="term" value="F:ATP binding"/>
    <property type="evidence" value="ECO:0007669"/>
    <property type="project" value="UniProtKB-UniRule"/>
</dbReference>
<dbReference type="GO" id="GO:0046933">
    <property type="term" value="F:proton-transporting ATP synthase activity, rotational mechanism"/>
    <property type="evidence" value="ECO:0007669"/>
    <property type="project" value="UniProtKB-UniRule"/>
</dbReference>
<dbReference type="CDD" id="cd12152">
    <property type="entry name" value="F1-ATPase_delta"/>
    <property type="match status" value="1"/>
</dbReference>
<dbReference type="FunFam" id="1.20.5.440:FF:000001">
    <property type="entry name" value="ATP synthase epsilon chain"/>
    <property type="match status" value="1"/>
</dbReference>
<dbReference type="FunFam" id="2.60.15.10:FF:000001">
    <property type="entry name" value="ATP synthase epsilon chain"/>
    <property type="match status" value="1"/>
</dbReference>
<dbReference type="Gene3D" id="1.20.5.440">
    <property type="entry name" value="ATP synthase delta/epsilon subunit, C-terminal domain"/>
    <property type="match status" value="1"/>
</dbReference>
<dbReference type="Gene3D" id="2.60.15.10">
    <property type="entry name" value="F0F1 ATP synthase delta/epsilon subunit, N-terminal"/>
    <property type="match status" value="1"/>
</dbReference>
<dbReference type="HAMAP" id="MF_00530">
    <property type="entry name" value="ATP_synth_epsil_bac"/>
    <property type="match status" value="1"/>
</dbReference>
<dbReference type="InterPro" id="IPR036794">
    <property type="entry name" value="ATP_F1_dsu/esu_C_sf"/>
</dbReference>
<dbReference type="InterPro" id="IPR001469">
    <property type="entry name" value="ATP_synth_F1_dsu/esu"/>
</dbReference>
<dbReference type="InterPro" id="IPR020546">
    <property type="entry name" value="ATP_synth_F1_dsu/esu_N"/>
</dbReference>
<dbReference type="InterPro" id="IPR020547">
    <property type="entry name" value="ATP_synth_F1_esu_C"/>
</dbReference>
<dbReference type="InterPro" id="IPR036771">
    <property type="entry name" value="ATPsynth_dsu/esu_N"/>
</dbReference>
<dbReference type="NCBIfam" id="TIGR01216">
    <property type="entry name" value="ATP_synt_epsi"/>
    <property type="match status" value="1"/>
</dbReference>
<dbReference type="NCBIfam" id="NF001847">
    <property type="entry name" value="PRK00571.1-4"/>
    <property type="match status" value="1"/>
</dbReference>
<dbReference type="PANTHER" id="PTHR13822">
    <property type="entry name" value="ATP SYNTHASE DELTA/EPSILON CHAIN"/>
    <property type="match status" value="1"/>
</dbReference>
<dbReference type="PANTHER" id="PTHR13822:SF10">
    <property type="entry name" value="ATP SYNTHASE EPSILON CHAIN, CHLOROPLASTIC"/>
    <property type="match status" value="1"/>
</dbReference>
<dbReference type="Pfam" id="PF00401">
    <property type="entry name" value="ATP-synt_DE"/>
    <property type="match status" value="1"/>
</dbReference>
<dbReference type="Pfam" id="PF02823">
    <property type="entry name" value="ATP-synt_DE_N"/>
    <property type="match status" value="1"/>
</dbReference>
<dbReference type="SUPFAM" id="SSF46604">
    <property type="entry name" value="Epsilon subunit of F1F0-ATP synthase C-terminal domain"/>
    <property type="match status" value="1"/>
</dbReference>
<dbReference type="SUPFAM" id="SSF51344">
    <property type="entry name" value="Epsilon subunit of F1F0-ATP synthase N-terminal domain"/>
    <property type="match status" value="1"/>
</dbReference>
<proteinExistence type="inferred from homology"/>
<comment type="function">
    <text evidence="1">Produces ATP from ADP in the presence of a proton gradient across the membrane.</text>
</comment>
<comment type="subunit">
    <text>F-type ATPases have 2 components, CF(1) - the catalytic core - and CF(0) - the membrane proton channel. CF(1) has five subunits: alpha(3), beta(3), gamma(1), delta(1), epsilon(1). CF(0) has three main subunits: a, b and c.</text>
</comment>
<comment type="subcellular location">
    <subcellularLocation>
        <location evidence="1">Cell inner membrane</location>
        <topology evidence="1">Peripheral membrane protein</topology>
    </subcellularLocation>
</comment>
<comment type="similarity">
    <text evidence="1">Belongs to the ATPase epsilon chain family.</text>
</comment>
<feature type="chain" id="PRO_0000265888" description="ATP synthase epsilon chain">
    <location>
        <begin position="1"/>
        <end position="142"/>
    </location>
</feature>